<protein>
    <recommendedName>
        <fullName>Phosphocarrier protein HPr</fullName>
    </recommendedName>
    <alternativeName>
        <fullName>Histidine-containing protein</fullName>
    </alternativeName>
</protein>
<comment type="function">
    <text evidence="3">General (non sugar-specific) component of the phosphoenolpyruvate-dependent sugar phosphotransferase system (sugar PTS). This major carbohydrate active-transport system catalyzes the phosphorylation of incoming sugar substrates concomitantly with their translocation across the cell membrane. The phosphoryl group from phosphoenolpyruvate (PEP) is transferred to the phosphoryl carrier protein HPr by enzyme I. Phospho-HPr then transfers it to the PTS EIIA domain.</text>
</comment>
<comment type="function">
    <text evidence="1">P-Ser-HPr interacts with the catabolite control protein A (CcpA), forming a complex that binds to DNA at the catabolite response elements cre, operator sites preceding a large number of catabolite-regulated genes. Thus, P-Ser-HPr is a corepressor in carbon catabolite repression (CCR), a mechanism that allows bacteria to coordinate and optimize the utilization of available carbon sources. P-Ser-HPr also plays a role in inducer exclusion, in which it probably interacts with several non-PTS permeases and inhibits their transport activity (By similarity).</text>
</comment>
<comment type="activity regulation">
    <text evidence="1">Phosphorylation on Ser-46 inhibits the phosphoryl transfer from enzyme I to HPr.</text>
</comment>
<comment type="subcellular location">
    <subcellularLocation>
        <location evidence="1">Cytoplasm</location>
    </subcellularLocation>
</comment>
<comment type="similarity">
    <text evidence="4">Belongs to the HPr family.</text>
</comment>
<keyword id="KW-0963">Cytoplasm</keyword>
<keyword id="KW-0597">Phosphoprotein</keyword>
<keyword id="KW-0598">Phosphotransferase system</keyword>
<keyword id="KW-0762">Sugar transport</keyword>
<keyword id="KW-0804">Transcription</keyword>
<keyword id="KW-0805">Transcription regulation</keyword>
<keyword id="KW-0813">Transport</keyword>
<organism>
    <name type="scientific">Lysinibacillus sphaericus</name>
    <name type="common">Bacillus sphaericus</name>
    <dbReference type="NCBI Taxonomy" id="1421"/>
    <lineage>
        <taxon>Bacteria</taxon>
        <taxon>Bacillati</taxon>
        <taxon>Bacillota</taxon>
        <taxon>Bacilli</taxon>
        <taxon>Bacillales</taxon>
        <taxon>Bacillaceae</taxon>
        <taxon>Lysinibacillus</taxon>
    </lineage>
</organism>
<proteinExistence type="evidence at protein level"/>
<accession>Q84F84</accession>
<name>PTHP_LYSSH</name>
<reference key="1">
    <citation type="journal article" date="2003" name="Microbiology">
        <title>Phosphoenolpyruvate phosphotransferase system and N-acetylglucosamine metabolism in Bacillus sphaericus.</title>
        <authorList>
            <person name="Alice A.F."/>
            <person name="Perez-Martinez G."/>
            <person name="Sanchez-Rivas C."/>
        </authorList>
    </citation>
    <scope>NUCLEOTIDE SEQUENCE [GENOMIC DNA]</scope>
    <scope>FUNCTION</scope>
    <scope>ACTIVE SITE HIS-15</scope>
    <scope>PHOSPHORYLATION AT SER-46</scope>
    <scope>MUTAGENESIS OF SER-46</scope>
    <source>
        <strain>2362</strain>
    </source>
</reference>
<dbReference type="EMBL" id="AY211495">
    <property type="protein sequence ID" value="AAO43399.1"/>
    <property type="molecule type" value="Genomic_DNA"/>
</dbReference>
<dbReference type="RefSeq" id="WP_012293998.1">
    <property type="nucleotide sequence ID" value="NZ_LWHI01000001.1"/>
</dbReference>
<dbReference type="SMR" id="Q84F84"/>
<dbReference type="STRING" id="1421.A2J09_05005"/>
<dbReference type="iPTMnet" id="Q84F84"/>
<dbReference type="OMA" id="MVCAEGD"/>
<dbReference type="GO" id="GO:0005737">
    <property type="term" value="C:cytoplasm"/>
    <property type="evidence" value="ECO:0007669"/>
    <property type="project" value="UniProtKB-SubCell"/>
</dbReference>
<dbReference type="GO" id="GO:0009401">
    <property type="term" value="P:phosphoenolpyruvate-dependent sugar phosphotransferase system"/>
    <property type="evidence" value="ECO:0007669"/>
    <property type="project" value="UniProtKB-KW"/>
</dbReference>
<dbReference type="CDD" id="cd00367">
    <property type="entry name" value="PTS-HPr_like"/>
    <property type="match status" value="1"/>
</dbReference>
<dbReference type="Gene3D" id="3.30.1340.10">
    <property type="entry name" value="HPr-like"/>
    <property type="match status" value="1"/>
</dbReference>
<dbReference type="InterPro" id="IPR050399">
    <property type="entry name" value="HPr"/>
</dbReference>
<dbReference type="InterPro" id="IPR000032">
    <property type="entry name" value="HPr-like"/>
</dbReference>
<dbReference type="InterPro" id="IPR035895">
    <property type="entry name" value="HPr-like_sf"/>
</dbReference>
<dbReference type="InterPro" id="IPR001020">
    <property type="entry name" value="PTS_HPr_His_P_site"/>
</dbReference>
<dbReference type="InterPro" id="IPR002114">
    <property type="entry name" value="PTS_HPr_Ser_P_site"/>
</dbReference>
<dbReference type="NCBIfam" id="TIGR01003">
    <property type="entry name" value="PTS_HPr_family"/>
    <property type="match status" value="1"/>
</dbReference>
<dbReference type="PANTHER" id="PTHR33705">
    <property type="entry name" value="PHOSPHOCARRIER PROTEIN HPR"/>
    <property type="match status" value="1"/>
</dbReference>
<dbReference type="PANTHER" id="PTHR33705:SF2">
    <property type="entry name" value="PHOSPHOCARRIER PROTEIN NPR"/>
    <property type="match status" value="1"/>
</dbReference>
<dbReference type="Pfam" id="PF00381">
    <property type="entry name" value="PTS-HPr"/>
    <property type="match status" value="1"/>
</dbReference>
<dbReference type="PRINTS" id="PR00107">
    <property type="entry name" value="PHOSPHOCPHPR"/>
</dbReference>
<dbReference type="SUPFAM" id="SSF55594">
    <property type="entry name" value="HPr-like"/>
    <property type="match status" value="1"/>
</dbReference>
<dbReference type="PROSITE" id="PS51350">
    <property type="entry name" value="PTS_HPR_DOM"/>
    <property type="match status" value="1"/>
</dbReference>
<dbReference type="PROSITE" id="PS00369">
    <property type="entry name" value="PTS_HPR_HIS"/>
    <property type="match status" value="1"/>
</dbReference>
<dbReference type="PROSITE" id="PS00589">
    <property type="entry name" value="PTS_HPR_SER"/>
    <property type="match status" value="1"/>
</dbReference>
<evidence type="ECO:0000250" key="1"/>
<evidence type="ECO:0000255" key="2">
    <source>
        <dbReference type="PROSITE-ProRule" id="PRU00681"/>
    </source>
</evidence>
<evidence type="ECO:0000269" key="3">
    <source>
    </source>
</evidence>
<evidence type="ECO:0000305" key="4"/>
<gene>
    <name type="primary">ptsH</name>
</gene>
<sequence length="88" mass="9450">MKTQQFTVIDPLGIHARPASQLVAKATPFASAIEVRTEEKAANLKSILGVMGLALKQGSQFTLYVEGEDEDQAFEALATLLTEMGLAQ</sequence>
<feature type="chain" id="PRO_0000107840" description="Phosphocarrier protein HPr">
    <location>
        <begin position="1"/>
        <end position="88"/>
    </location>
</feature>
<feature type="domain" description="HPr" evidence="2">
    <location>
        <begin position="1"/>
        <end position="88"/>
    </location>
</feature>
<feature type="active site" description="Pros-phosphohistidine intermediate" evidence="2 3">
    <location>
        <position position="15"/>
    </location>
</feature>
<feature type="modified residue" description="Phosphoserine; by HPrK/P" evidence="2 3">
    <location>
        <position position="46"/>
    </location>
</feature>
<feature type="mutagenesis site" description="No phosphorylation by HPrK/P." evidence="3">
    <original>S</original>
    <variation>Q</variation>
    <location>
        <position position="46"/>
    </location>
</feature>